<evidence type="ECO:0000255" key="1">
    <source>
        <dbReference type="PROSITE-ProRule" id="PRU00145"/>
    </source>
</evidence>
<evidence type="ECO:0000255" key="2">
    <source>
        <dbReference type="PROSITE-ProRule" id="PRU00288"/>
    </source>
</evidence>
<evidence type="ECO:0000269" key="3">
    <source>
    </source>
</evidence>
<evidence type="ECO:0000303" key="4">
    <source>
    </source>
</evidence>
<evidence type="ECO:0000305" key="5"/>
<protein>
    <recommendedName>
        <fullName>Arf-GAP with dual PH domain-containing protein 2</fullName>
    </recommendedName>
    <alternativeName>
        <fullName>Centaurin-alpha-2</fullName>
        <shortName>Cnt-a2</shortName>
    </alternativeName>
</protein>
<accession>Q9NPF8</accession>
<accession>Q8N4Q6</accession>
<accession>Q96SD5</accession>
<name>ADAP2_HUMAN</name>
<comment type="function">
    <text evidence="3 5">GTPase-activating protein for the ADP ribosylation factor family (Potential). Binds phosphatidylinositol 3,4,5-trisphosphate (PtdInsP3) and inositol 1,3,4,5-tetrakisphosphate (InsP4). Possesses a stoichiometry of two binding sites for InsP4 with identical affinity.</text>
</comment>
<comment type="interaction">
    <interactant intactId="EBI-718895">
        <id>Q9NPF8</id>
    </interactant>
    <interactant intactId="EBI-81279">
        <id>Q9Y6K9</id>
        <label>IKBKG</label>
    </interactant>
    <organismsDiffer>false</organismsDiffer>
    <experiments>2</experiments>
</comment>
<comment type="subcellular location">
    <subcellularLocation>
        <location evidence="3">Cytoplasm</location>
    </subcellularLocation>
    <subcellularLocation>
        <location evidence="3">Cell membrane</location>
    </subcellularLocation>
    <text>Constitutively associated with the plasma membrane. Excluded from the nucleus.</text>
</comment>
<comment type="alternative products">
    <event type="alternative splicing"/>
    <isoform>
        <id>Q9NPF8-1</id>
        <name>1</name>
        <sequence type="displayed"/>
    </isoform>
    <isoform>
        <id>Q9NPF8-2</id>
        <name>2</name>
        <sequence type="described" ref="VSP_011180"/>
    </isoform>
</comment>
<comment type="tissue specificity">
    <text evidence="3">Highly expressed in placenta, spleen, kidney, skeletal muscle and adrenal gland. Weakly expressed in thyroid, liver, heart, lung, small intestine, peripheral blood leukocytes. Not detected in spinal cord, brain, stomach, trachea, colon, lymph node and bone marrow.</text>
</comment>
<comment type="miscellaneous">
    <molecule>Isoform 2</molecule>
    <text evidence="5">May be due to a competing acceptor splice site.</text>
</comment>
<organism>
    <name type="scientific">Homo sapiens</name>
    <name type="common">Human</name>
    <dbReference type="NCBI Taxonomy" id="9606"/>
    <lineage>
        <taxon>Eukaryota</taxon>
        <taxon>Metazoa</taxon>
        <taxon>Chordata</taxon>
        <taxon>Craniata</taxon>
        <taxon>Vertebrata</taxon>
        <taxon>Euteleostomi</taxon>
        <taxon>Mammalia</taxon>
        <taxon>Eutheria</taxon>
        <taxon>Euarchontoglires</taxon>
        <taxon>Primates</taxon>
        <taxon>Haplorrhini</taxon>
        <taxon>Catarrhini</taxon>
        <taxon>Hominidae</taxon>
        <taxon>Homo</taxon>
    </lineage>
</organism>
<reference key="1">
    <citation type="journal article" date="2002" name="Eur. J. Cell Biol.">
        <title>Identification of centaurin-alpha2: a phosphatidylinositide-binding protein present in fat, heart and skeletal muscle.</title>
        <authorList>
            <person name="Whitley P."/>
            <person name="Gibbard A.M."/>
            <person name="Koumanov F."/>
            <person name="Oldfield S."/>
            <person name="Kilgour E.E."/>
            <person name="Prestwich G.D."/>
            <person name="Holman G.D."/>
        </authorList>
    </citation>
    <scope>NUCLEOTIDE SEQUENCE [MRNA] (ISOFORM 1)</scope>
</reference>
<reference key="2">
    <citation type="journal article" date="2000" name="Genomics">
        <title>A common set of at least 11 functional genes is lost in the majority of NF1 patients with gross deletions.</title>
        <authorList>
            <person name="Jenne D.E."/>
            <person name="Tinschert S."/>
            <person name="Stegmann E."/>
            <person name="Reimann H."/>
            <person name="Nuernberg P."/>
            <person name="Horn D."/>
            <person name="Naumann I."/>
            <person name="Buske A."/>
            <person name="Thiel G."/>
        </authorList>
    </citation>
    <scope>NUCLEOTIDE SEQUENCE [MRNA] (ISOFORM 1)</scope>
</reference>
<reference key="3">
    <citation type="submission" date="1999-05" db="EMBL/GenBank/DDBJ databases">
        <authorList>
            <person name="Bertsch U."/>
            <person name="Illies C."/>
            <person name="Mayr G.W."/>
        </authorList>
    </citation>
    <scope>NUCLEOTIDE SEQUENCE [MRNA] (ISOFORM 1)</scope>
</reference>
<reference key="4">
    <citation type="journal article" date="2004" name="Genome Res.">
        <title>The status, quality, and expansion of the NIH full-length cDNA project: the Mammalian Gene Collection (MGC).</title>
        <authorList>
            <consortium name="The MGC Project Team"/>
        </authorList>
    </citation>
    <scope>NUCLEOTIDE SEQUENCE [LARGE SCALE MRNA] (ISOFORM 2)</scope>
    <source>
        <tissue>Leukocyte</tissue>
    </source>
</reference>
<reference key="5">
    <citation type="journal article" date="2004" name="J. Neurochem.">
        <title>Identification of gene structure and subcellular localization of human centaurin alpha 2, and p42IP4, a family of two highly homologous, Ins 1,3,4,5-P4-/PtdIns 3,4,5-P3-binding, adapter proteins.</title>
        <authorList>
            <person name="Hanck T."/>
            <person name="Stricker R."/>
            <person name="Sedehizade F."/>
            <person name="Reiser G."/>
        </authorList>
    </citation>
    <scope>FUNCTION</scope>
    <scope>TISSUE SPECIFICITY</scope>
    <scope>SUBCELLULAR LOCATION</scope>
</reference>
<sequence>MGDRERNKKRLLELLRAPDTGNAHCADCGAADPDWASYKLGIFICLNCCGVHRNFPDISRVKSVRLDFWDDSIVEFMIHNGNLRVKAKFEARVPAFYYIPQANDCLVLKEQWIRAKYERREFMADGETISLPGNREGFLWKRGRDNSQFLRRKFVLLAREGLLKYFTKEQGKSPKAVISIKDLNATFQTEKIGHPHGLQITYRRDGHTRNLFVYHESGKEIVDWFNALRAARLQYLKMAFPELPESELVPFLTRNYLKQGFMEKTGPKQKEPFKKRWFALDCHERRLLYYKNPLDAFEQGQVFLGNKEQGYEAYEDLPKGIRGNRWKAGLTIVTPERRFVLTCPSEKEQQEWLESLRGVLSSPLTPLNRLTASTESGRSSR</sequence>
<proteinExistence type="evidence at protein level"/>
<feature type="chain" id="PRO_0000074206" description="Arf-GAP with dual PH domain-containing protein 2">
    <location>
        <begin position="1"/>
        <end position="381"/>
    </location>
</feature>
<feature type="domain" description="Arf-GAP" evidence="2">
    <location>
        <begin position="9"/>
        <end position="131"/>
    </location>
</feature>
<feature type="domain" description="PH 1" evidence="1">
    <location>
        <begin position="132"/>
        <end position="233"/>
    </location>
</feature>
<feature type="domain" description="PH 2" evidence="1">
    <location>
        <begin position="255"/>
        <end position="361"/>
    </location>
</feature>
<feature type="zinc finger region" description="C4-type" evidence="2">
    <location>
        <begin position="25"/>
        <end position="48"/>
    </location>
</feature>
<feature type="splice variant" id="VSP_011180" description="In isoform 2." evidence="4">
    <location>
        <position position="269"/>
    </location>
</feature>
<feature type="sequence conflict" description="In Ref. 3; CAC40651." evidence="5" ref="3">
    <original>L</original>
    <variation>P</variation>
    <location>
        <position position="12"/>
    </location>
</feature>
<dbReference type="EMBL" id="AJ238994">
    <property type="protein sequence ID" value="CAB88383.1"/>
    <property type="molecule type" value="mRNA"/>
</dbReference>
<dbReference type="EMBL" id="AJ272195">
    <property type="protein sequence ID" value="CAB77266.1"/>
    <property type="molecule type" value="mRNA"/>
</dbReference>
<dbReference type="EMBL" id="AJ242782">
    <property type="protein sequence ID" value="CAC40651.1"/>
    <property type="molecule type" value="mRNA"/>
</dbReference>
<dbReference type="EMBL" id="BC033758">
    <property type="protein sequence ID" value="AAH33758.1"/>
    <property type="molecule type" value="mRNA"/>
</dbReference>
<dbReference type="CCDS" id="CCDS11261.1">
    <molecule id="Q9NPF8-1"/>
</dbReference>
<dbReference type="RefSeq" id="NP_001333643.1">
    <molecule id="Q9NPF8-2"/>
    <property type="nucleotide sequence ID" value="NM_001346714.2"/>
</dbReference>
<dbReference type="RefSeq" id="NP_060874.1">
    <molecule id="Q9NPF8-1"/>
    <property type="nucleotide sequence ID" value="NM_018404.3"/>
</dbReference>
<dbReference type="SMR" id="Q9NPF8"/>
<dbReference type="BioGRID" id="120915">
    <property type="interactions" value="15"/>
</dbReference>
<dbReference type="FunCoup" id="Q9NPF8">
    <property type="interactions" value="892"/>
</dbReference>
<dbReference type="IntAct" id="Q9NPF8">
    <property type="interactions" value="5"/>
</dbReference>
<dbReference type="STRING" id="9606.ENSP00000464121"/>
<dbReference type="iPTMnet" id="Q9NPF8"/>
<dbReference type="PhosphoSitePlus" id="Q9NPF8"/>
<dbReference type="BioMuta" id="ADAP2"/>
<dbReference type="DMDM" id="27923749"/>
<dbReference type="jPOST" id="Q9NPF8"/>
<dbReference type="MassIVE" id="Q9NPF8"/>
<dbReference type="PaxDb" id="9606-ENSP00000329468"/>
<dbReference type="PeptideAtlas" id="Q9NPF8"/>
<dbReference type="ProteomicsDB" id="81987">
    <molecule id="Q9NPF8-1"/>
</dbReference>
<dbReference type="ProteomicsDB" id="81988">
    <molecule id="Q9NPF8-2"/>
</dbReference>
<dbReference type="Antibodypedia" id="26908">
    <property type="antibodies" value="169 antibodies from 29 providers"/>
</dbReference>
<dbReference type="DNASU" id="55803"/>
<dbReference type="Ensembl" id="ENST00000330889.8">
    <molecule id="Q9NPF8-1"/>
    <property type="protein sequence ID" value="ENSP00000329468.3"/>
    <property type="gene ID" value="ENSG00000184060.12"/>
</dbReference>
<dbReference type="GeneID" id="55803"/>
<dbReference type="KEGG" id="hsa:55803"/>
<dbReference type="MANE-Select" id="ENST00000330889.8">
    <property type="protein sequence ID" value="ENSP00000329468.3"/>
    <property type="RefSeq nucleotide sequence ID" value="NM_018404.3"/>
    <property type="RefSeq protein sequence ID" value="NP_060874.1"/>
</dbReference>
<dbReference type="UCSC" id="uc002hfx.4">
    <molecule id="Q9NPF8-1"/>
    <property type="organism name" value="human"/>
</dbReference>
<dbReference type="AGR" id="HGNC:16487"/>
<dbReference type="CTD" id="55803"/>
<dbReference type="DisGeNET" id="55803"/>
<dbReference type="GeneCards" id="ADAP2"/>
<dbReference type="HGNC" id="HGNC:16487">
    <property type="gene designation" value="ADAP2"/>
</dbReference>
<dbReference type="HPA" id="ENSG00000184060">
    <property type="expression patterns" value="Low tissue specificity"/>
</dbReference>
<dbReference type="MalaCards" id="ADAP2"/>
<dbReference type="MIM" id="608635">
    <property type="type" value="gene"/>
</dbReference>
<dbReference type="neXtProt" id="NX_Q9NPF8"/>
<dbReference type="OpenTargets" id="ENSG00000184060"/>
<dbReference type="PharmGKB" id="PA26405"/>
<dbReference type="VEuPathDB" id="HostDB:ENSG00000184060"/>
<dbReference type="eggNOG" id="KOG0703">
    <property type="taxonomic scope" value="Eukaryota"/>
</dbReference>
<dbReference type="GeneTree" id="ENSGT00940000156498"/>
<dbReference type="InParanoid" id="Q9NPF8"/>
<dbReference type="OrthoDB" id="73919at2759"/>
<dbReference type="PAN-GO" id="Q9NPF8">
    <property type="GO annotations" value="7 GO annotations based on evolutionary models"/>
</dbReference>
<dbReference type="PhylomeDB" id="Q9NPF8"/>
<dbReference type="TreeFam" id="TF324540"/>
<dbReference type="PathwayCommons" id="Q9NPF8"/>
<dbReference type="SignaLink" id="Q9NPF8"/>
<dbReference type="BioGRID-ORCS" id="55803">
    <property type="hits" value="12 hits in 1142 CRISPR screens"/>
</dbReference>
<dbReference type="ChiTaRS" id="ADAP2">
    <property type="organism name" value="human"/>
</dbReference>
<dbReference type="GeneWiki" id="CENTA2"/>
<dbReference type="GenomeRNAi" id="55803"/>
<dbReference type="Pharos" id="Q9NPF8">
    <property type="development level" value="Tbio"/>
</dbReference>
<dbReference type="PRO" id="PR:Q9NPF8"/>
<dbReference type="Proteomes" id="UP000005640">
    <property type="component" value="Chromosome 17"/>
</dbReference>
<dbReference type="RNAct" id="Q9NPF8">
    <property type="molecule type" value="protein"/>
</dbReference>
<dbReference type="Bgee" id="ENSG00000184060">
    <property type="expression patterns" value="Expressed in monocyte and 182 other cell types or tissues"/>
</dbReference>
<dbReference type="ExpressionAtlas" id="Q9NPF8">
    <property type="expression patterns" value="baseline and differential"/>
</dbReference>
<dbReference type="GO" id="GO:0005737">
    <property type="term" value="C:cytoplasm"/>
    <property type="evidence" value="ECO:0000314"/>
    <property type="project" value="UniProtKB"/>
</dbReference>
<dbReference type="GO" id="GO:0043231">
    <property type="term" value="C:intracellular membrane-bounded organelle"/>
    <property type="evidence" value="ECO:0000318"/>
    <property type="project" value="GO_Central"/>
</dbReference>
<dbReference type="GO" id="GO:0005740">
    <property type="term" value="C:mitochondrial envelope"/>
    <property type="evidence" value="ECO:0000250"/>
    <property type="project" value="UniProtKB"/>
</dbReference>
<dbReference type="GO" id="GO:0005886">
    <property type="term" value="C:plasma membrane"/>
    <property type="evidence" value="ECO:0000314"/>
    <property type="project" value="UniProtKB"/>
</dbReference>
<dbReference type="GO" id="GO:0005096">
    <property type="term" value="F:GTPase activator activity"/>
    <property type="evidence" value="ECO:0000318"/>
    <property type="project" value="GO_Central"/>
</dbReference>
<dbReference type="GO" id="GO:0043533">
    <property type="term" value="F:inositol 1,3,4,5 tetrakisphosphate binding"/>
    <property type="evidence" value="ECO:0000314"/>
    <property type="project" value="UniProtKB"/>
</dbReference>
<dbReference type="GO" id="GO:0005547">
    <property type="term" value="F:phosphatidylinositol-3,4,5-trisphosphate binding"/>
    <property type="evidence" value="ECO:0000314"/>
    <property type="project" value="UniProtKB"/>
</dbReference>
<dbReference type="GO" id="GO:0043325">
    <property type="term" value="F:phosphatidylinositol-3,4-bisphosphate binding"/>
    <property type="evidence" value="ECO:0000250"/>
    <property type="project" value="UniProtKB"/>
</dbReference>
<dbReference type="GO" id="GO:0005546">
    <property type="term" value="F:phosphatidylinositol-4,5-bisphosphate binding"/>
    <property type="evidence" value="ECO:0000250"/>
    <property type="project" value="UniProtKB"/>
</dbReference>
<dbReference type="GO" id="GO:0030674">
    <property type="term" value="F:protein-macromolecule adaptor activity"/>
    <property type="evidence" value="ECO:0000303"/>
    <property type="project" value="UniProtKB"/>
</dbReference>
<dbReference type="GO" id="GO:0008270">
    <property type="term" value="F:zinc ion binding"/>
    <property type="evidence" value="ECO:0007669"/>
    <property type="project" value="UniProtKB-KW"/>
</dbReference>
<dbReference type="GO" id="GO:0007507">
    <property type="term" value="P:heart development"/>
    <property type="evidence" value="ECO:0000270"/>
    <property type="project" value="UniProtKB"/>
</dbReference>
<dbReference type="CDD" id="cd08844">
    <property type="entry name" value="ArfGap_ADAP2"/>
    <property type="match status" value="1"/>
</dbReference>
<dbReference type="CDD" id="cd13252">
    <property type="entry name" value="PH1_ADAP"/>
    <property type="match status" value="1"/>
</dbReference>
<dbReference type="CDD" id="cd01251">
    <property type="entry name" value="PH2_ADAP"/>
    <property type="match status" value="1"/>
</dbReference>
<dbReference type="FunFam" id="2.30.29.30:FF:000080">
    <property type="entry name" value="Arf-GAP with dual PH domain-containing protein 1"/>
    <property type="match status" value="1"/>
</dbReference>
<dbReference type="FunFam" id="2.30.29.30:FF:000099">
    <property type="entry name" value="Arf-GAP with dual PH domain-containing protein 1"/>
    <property type="match status" value="1"/>
</dbReference>
<dbReference type="FunFam" id="1.10.220.150:FF:000015">
    <property type="entry name" value="arf-GAP with dual PH domain-containing protein 2 isoform X1"/>
    <property type="match status" value="1"/>
</dbReference>
<dbReference type="Gene3D" id="1.10.220.150">
    <property type="entry name" value="Arf GTPase activating protein"/>
    <property type="match status" value="1"/>
</dbReference>
<dbReference type="Gene3D" id="2.30.29.30">
    <property type="entry name" value="Pleckstrin-homology domain (PH domain)/Phosphotyrosine-binding domain (PTB)"/>
    <property type="match status" value="2"/>
</dbReference>
<dbReference type="InterPro" id="IPR052589">
    <property type="entry name" value="Arf-GAP_dual-PH_domain"/>
</dbReference>
<dbReference type="InterPro" id="IPR037278">
    <property type="entry name" value="ARFGAP/RecO"/>
</dbReference>
<dbReference type="InterPro" id="IPR001164">
    <property type="entry name" value="ArfGAP_dom"/>
</dbReference>
<dbReference type="InterPro" id="IPR038508">
    <property type="entry name" value="ArfGAP_dom_sf"/>
</dbReference>
<dbReference type="InterPro" id="IPR011993">
    <property type="entry name" value="PH-like_dom_sf"/>
</dbReference>
<dbReference type="InterPro" id="IPR037849">
    <property type="entry name" value="PH1_ADAP"/>
</dbReference>
<dbReference type="InterPro" id="IPR037851">
    <property type="entry name" value="PH2_ADAP"/>
</dbReference>
<dbReference type="InterPro" id="IPR001849">
    <property type="entry name" value="PH_domain"/>
</dbReference>
<dbReference type="PANTHER" id="PTHR46021">
    <property type="entry name" value="ARF-GAP WITH DUAL PH DOMAIN-CONTAINING PROTEIN 1-LIKE PROTEIN"/>
    <property type="match status" value="1"/>
</dbReference>
<dbReference type="PANTHER" id="PTHR46021:SF6">
    <property type="entry name" value="ARF-GAP WITH DUAL PH DOMAIN-CONTAINING PROTEIN 2"/>
    <property type="match status" value="1"/>
</dbReference>
<dbReference type="Pfam" id="PF01412">
    <property type="entry name" value="ArfGap"/>
    <property type="match status" value="1"/>
</dbReference>
<dbReference type="Pfam" id="PF00169">
    <property type="entry name" value="PH"/>
    <property type="match status" value="2"/>
</dbReference>
<dbReference type="PRINTS" id="PR00405">
    <property type="entry name" value="REVINTRACTNG"/>
</dbReference>
<dbReference type="SMART" id="SM00105">
    <property type="entry name" value="ArfGap"/>
    <property type="match status" value="1"/>
</dbReference>
<dbReference type="SMART" id="SM00233">
    <property type="entry name" value="PH"/>
    <property type="match status" value="2"/>
</dbReference>
<dbReference type="SUPFAM" id="SSF57863">
    <property type="entry name" value="ArfGap/RecO-like zinc finger"/>
    <property type="match status" value="1"/>
</dbReference>
<dbReference type="SUPFAM" id="SSF50729">
    <property type="entry name" value="PH domain-like"/>
    <property type="match status" value="2"/>
</dbReference>
<dbReference type="PROSITE" id="PS50115">
    <property type="entry name" value="ARFGAP"/>
    <property type="match status" value="1"/>
</dbReference>
<dbReference type="PROSITE" id="PS50003">
    <property type="entry name" value="PH_DOMAIN"/>
    <property type="match status" value="2"/>
</dbReference>
<keyword id="KW-0025">Alternative splicing</keyword>
<keyword id="KW-1003">Cell membrane</keyword>
<keyword id="KW-0963">Cytoplasm</keyword>
<keyword id="KW-0343">GTPase activation</keyword>
<keyword id="KW-0472">Membrane</keyword>
<keyword id="KW-0479">Metal-binding</keyword>
<keyword id="KW-1267">Proteomics identification</keyword>
<keyword id="KW-1185">Reference proteome</keyword>
<keyword id="KW-0677">Repeat</keyword>
<keyword id="KW-0862">Zinc</keyword>
<keyword id="KW-0863">Zinc-finger</keyword>
<gene>
    <name type="primary">ADAP2</name>
    <name type="synonym">CENTA2</name>
</gene>